<evidence type="ECO:0000250" key="1"/>
<evidence type="ECO:0000305" key="2"/>
<dbReference type="EC" id="4.1.99.3"/>
<dbReference type="EMBL" id="X15060">
    <property type="protein sequence ID" value="CAA33161.1"/>
    <property type="molecule type" value="Genomic_DNA"/>
</dbReference>
<dbReference type="PIR" id="S05573">
    <property type="entry name" value="S05573"/>
</dbReference>
<dbReference type="SMR" id="P12768"/>
<dbReference type="GO" id="GO:0003904">
    <property type="term" value="F:deoxyribodipyrimidine photo-lyase activity"/>
    <property type="evidence" value="ECO:0007669"/>
    <property type="project" value="UniProtKB-EC"/>
</dbReference>
<dbReference type="GO" id="GO:0003677">
    <property type="term" value="F:DNA binding"/>
    <property type="evidence" value="ECO:0007669"/>
    <property type="project" value="UniProtKB-KW"/>
</dbReference>
<dbReference type="GO" id="GO:0071949">
    <property type="term" value="F:FAD binding"/>
    <property type="evidence" value="ECO:0007669"/>
    <property type="project" value="TreeGrafter"/>
</dbReference>
<dbReference type="GO" id="GO:0006281">
    <property type="term" value="P:DNA repair"/>
    <property type="evidence" value="ECO:0007669"/>
    <property type="project" value="UniProtKB-KW"/>
</dbReference>
<dbReference type="GO" id="GO:0009416">
    <property type="term" value="P:response to light stimulus"/>
    <property type="evidence" value="ECO:0007669"/>
    <property type="project" value="TreeGrafter"/>
</dbReference>
<dbReference type="Gene3D" id="1.25.40.80">
    <property type="match status" value="1"/>
</dbReference>
<dbReference type="Gene3D" id="1.10.579.10">
    <property type="entry name" value="DNA Cyclobutane Dipyrimidine Photolyase, subunit A, domain 3"/>
    <property type="match status" value="1"/>
</dbReference>
<dbReference type="Gene3D" id="3.40.50.620">
    <property type="entry name" value="HUPs"/>
    <property type="match status" value="1"/>
</dbReference>
<dbReference type="InterPro" id="IPR036134">
    <property type="entry name" value="Crypto/Photolyase_FAD-like_sf"/>
</dbReference>
<dbReference type="InterPro" id="IPR036155">
    <property type="entry name" value="Crypto/Photolyase_N_sf"/>
</dbReference>
<dbReference type="InterPro" id="IPR005101">
    <property type="entry name" value="Cryptochr/Photolyase_FAD-bd"/>
</dbReference>
<dbReference type="InterPro" id="IPR002081">
    <property type="entry name" value="Cryptochrome/DNA_photolyase_1"/>
</dbReference>
<dbReference type="InterPro" id="IPR018394">
    <property type="entry name" value="DNA_photolyase_1_CS_C"/>
</dbReference>
<dbReference type="InterPro" id="IPR006050">
    <property type="entry name" value="DNA_photolyase_N"/>
</dbReference>
<dbReference type="InterPro" id="IPR014729">
    <property type="entry name" value="Rossmann-like_a/b/a_fold"/>
</dbReference>
<dbReference type="PANTHER" id="PTHR11455">
    <property type="entry name" value="CRYPTOCHROME"/>
    <property type="match status" value="1"/>
</dbReference>
<dbReference type="PANTHER" id="PTHR11455:SF9">
    <property type="entry name" value="CRYPTOCHROME CIRCADIAN CLOCK 5 ISOFORM X1"/>
    <property type="match status" value="1"/>
</dbReference>
<dbReference type="Pfam" id="PF00875">
    <property type="entry name" value="DNA_photolyase"/>
    <property type="match status" value="1"/>
</dbReference>
<dbReference type="Pfam" id="PF03441">
    <property type="entry name" value="FAD_binding_7"/>
    <property type="match status" value="1"/>
</dbReference>
<dbReference type="PRINTS" id="PR00147">
    <property type="entry name" value="DNAPHOTLYASE"/>
</dbReference>
<dbReference type="SUPFAM" id="SSF48173">
    <property type="entry name" value="Cryptochrome/photolyase FAD-binding domain"/>
    <property type="match status" value="1"/>
</dbReference>
<dbReference type="SUPFAM" id="SSF52425">
    <property type="entry name" value="Cryptochrome/photolyase, N-terminal domain"/>
    <property type="match status" value="1"/>
</dbReference>
<dbReference type="PROSITE" id="PS00394">
    <property type="entry name" value="DNA_PHOTOLYASES_1_1"/>
    <property type="match status" value="1"/>
</dbReference>
<dbReference type="PROSITE" id="PS00691">
    <property type="entry name" value="DNA_PHOTOLYASES_1_2"/>
    <property type="match status" value="1"/>
</dbReference>
<dbReference type="PROSITE" id="PS51645">
    <property type="entry name" value="PHR_CRY_ALPHA_BETA"/>
    <property type="match status" value="1"/>
</dbReference>
<feature type="chain" id="PRO_0000085111" description="Deoxyribodipyrimidine photo-lyase">
    <location>
        <begin position="1"/>
        <end position="455"/>
    </location>
</feature>
<feature type="domain" description="Photolyase/cryptochrome alpha/beta">
    <location>
        <begin position="2"/>
        <end position="131"/>
    </location>
</feature>
<feature type="region of interest" description="Interaction with DNA" evidence="1">
    <location>
        <begin position="266"/>
        <end position="273"/>
    </location>
</feature>
<feature type="region of interest" description="Interaction with DNA" evidence="1">
    <location>
        <begin position="330"/>
        <end position="331"/>
    </location>
</feature>
<feature type="binding site" evidence="1">
    <location>
        <position position="219"/>
    </location>
    <ligand>
        <name>FAD</name>
        <dbReference type="ChEBI" id="CHEBI:57692"/>
    </ligand>
</feature>
<feature type="binding site" evidence="1">
    <location>
        <begin position="231"/>
        <end position="235"/>
    </location>
    <ligand>
        <name>FAD</name>
        <dbReference type="ChEBI" id="CHEBI:57692"/>
    </ligand>
</feature>
<feature type="binding site" evidence="1">
    <location>
        <begin position="361"/>
        <end position="363"/>
    </location>
    <ligand>
        <name>FAD</name>
        <dbReference type="ChEBI" id="CHEBI:57692"/>
    </ligand>
</feature>
<feature type="binding site" evidence="1">
    <location>
        <position position="392"/>
    </location>
    <ligand>
        <name>DNA</name>
        <dbReference type="ChEBI" id="CHEBI:16991"/>
    </ligand>
</feature>
<feature type="site" description="Electron transfer via tryptophanyl radical" evidence="1">
    <location>
        <position position="295"/>
    </location>
</feature>
<feature type="site" description="Electron transfer via tryptophanyl radical" evidence="1">
    <location>
        <position position="348"/>
    </location>
</feature>
<feature type="site" description="Electron transfer via tryptophanyl radical" evidence="1">
    <location>
        <position position="371"/>
    </location>
</feature>
<organism>
    <name type="scientific">Streptomyces griseus</name>
    <dbReference type="NCBI Taxonomy" id="1911"/>
    <lineage>
        <taxon>Bacteria</taxon>
        <taxon>Bacillati</taxon>
        <taxon>Actinomycetota</taxon>
        <taxon>Actinomycetes</taxon>
        <taxon>Kitasatosporales</taxon>
        <taxon>Streptomycetaceae</taxon>
        <taxon>Streptomyces</taxon>
    </lineage>
</organism>
<accession>P12768</accession>
<gene>
    <name type="primary">phr</name>
</gene>
<name>PHR_STRGR</name>
<sequence>MSVAVVLFTSDLRLHDNPVLRAALRDADEVVPLFVRDDAVHRAGFDAPNPLAFLADCLAALDAGLRHRGGRLIVRRGEAATEVRRVAEETGAARVHIAAGVSRYAARREQRIREALADSGRELHVHDAVVTALAPGRVVPTGGKDHFAVFTPYFRRWEAEGVRGTQTAPRTVRVPDGVASDPLPDRDCVENLSPGLARGGEEAGRKLVTSWLNGPMADYEDGHDDLAGDATSRLSPHLHFGTVSAAELVHRAREKGGLGGEAFVRQLAWRDFHHQVLADRPDASWSDYRPRHDRWRSDADEMHAWKSGLTGYPLVDAAMRQLAHEGWMHNRARMLAASFLTKTLYVDWREGARHFLDLLVDGDVANNQLNWQWVAGTGTDTRPNRVLNPVIQGKRFDARGDYVRGWVPELAEVEGSAIHEPWKLQGLDRAGLDYPDPVVDLAEARARFERARGLD</sequence>
<keyword id="KW-0157">Chromophore</keyword>
<keyword id="KW-0227">DNA damage</keyword>
<keyword id="KW-0234">DNA repair</keyword>
<keyword id="KW-0238">DNA-binding</keyword>
<keyword id="KW-0274">FAD</keyword>
<keyword id="KW-0285">Flavoprotein</keyword>
<keyword id="KW-0456">Lyase</keyword>
<keyword id="KW-0547">Nucleotide-binding</keyword>
<reference key="1">
    <citation type="journal article" date="1989" name="Nucleic Acids Res.">
        <title>Molecular characterization of a gene encoding a photolyase from Streptomyces griseus.</title>
        <authorList>
            <person name="Kobayashi T."/>
            <person name="Takao M."/>
            <person name="Oikawa A."/>
            <person name="Yasui A."/>
        </authorList>
    </citation>
    <scope>NUCLEOTIDE SEQUENCE [GENOMIC DNA]</scope>
</reference>
<comment type="function">
    <text>Involved in repair of UV radiation-induced DNA damage. Catalyzes the light-dependent monomerization (300-600 nm) of cyclobutyl pyrimidine dimers (in cis-syn configuration), which are formed between adjacent bases on the same DNA strand upon exposure to ultraviolet radiation.</text>
</comment>
<comment type="catalytic activity">
    <reaction>
        <text>cyclobutadipyrimidine (in DNA) = 2 pyrimidine residues (in DNA).</text>
        <dbReference type="EC" id="4.1.99.3"/>
    </reaction>
</comment>
<comment type="cofactor">
    <cofactor>
        <name>FAD</name>
        <dbReference type="ChEBI" id="CHEBI:57692"/>
    </cofactor>
    <text>Binds 1 FAD per subunit.</text>
</comment>
<comment type="cofactor">
    <cofactor>
        <name>coenzyme F420-(gamma-Glu)n</name>
        <dbReference type="ChEBI" id="CHEBI:133980"/>
    </cofactor>
    <text>Binds 1 coenzyme F420 non-covalently per subunit.</text>
</comment>
<comment type="subunit">
    <text evidence="1">Monomer.</text>
</comment>
<comment type="similarity">
    <text evidence="2">Belongs to the DNA photolyase class-1 family.</text>
</comment>
<protein>
    <recommendedName>
        <fullName>Deoxyribodipyrimidine photo-lyase</fullName>
        <ecNumber>4.1.99.3</ecNumber>
    </recommendedName>
    <alternativeName>
        <fullName>DNA photolyase</fullName>
    </alternativeName>
    <alternativeName>
        <fullName>Photoreactivating enzyme</fullName>
    </alternativeName>
</protein>
<proteinExistence type="inferred from homology"/>